<reference key="1">
    <citation type="journal article" date="1997" name="Microbiology">
        <title>Sequencing and functional annotation of the Bacillus subtilis genes in the 200 kb rrnB-dnaB region.</title>
        <authorList>
            <person name="Lapidus A."/>
            <person name="Galleron N."/>
            <person name="Sorokin A."/>
            <person name="Ehrlich S.D."/>
        </authorList>
    </citation>
    <scope>NUCLEOTIDE SEQUENCE [GENOMIC DNA]</scope>
    <source>
        <strain>168</strain>
    </source>
</reference>
<reference key="2">
    <citation type="journal article" date="1997" name="Nature">
        <title>The complete genome sequence of the Gram-positive bacterium Bacillus subtilis.</title>
        <authorList>
            <person name="Kunst F."/>
            <person name="Ogasawara N."/>
            <person name="Moszer I."/>
            <person name="Albertini A.M."/>
            <person name="Alloni G."/>
            <person name="Azevedo V."/>
            <person name="Bertero M.G."/>
            <person name="Bessieres P."/>
            <person name="Bolotin A."/>
            <person name="Borchert S."/>
            <person name="Borriss R."/>
            <person name="Boursier L."/>
            <person name="Brans A."/>
            <person name="Braun M."/>
            <person name="Brignell S.C."/>
            <person name="Bron S."/>
            <person name="Brouillet S."/>
            <person name="Bruschi C.V."/>
            <person name="Caldwell B."/>
            <person name="Capuano V."/>
            <person name="Carter N.M."/>
            <person name="Choi S.-K."/>
            <person name="Codani J.-J."/>
            <person name="Connerton I.F."/>
            <person name="Cummings N.J."/>
            <person name="Daniel R.A."/>
            <person name="Denizot F."/>
            <person name="Devine K.M."/>
            <person name="Duesterhoeft A."/>
            <person name="Ehrlich S.D."/>
            <person name="Emmerson P.T."/>
            <person name="Entian K.-D."/>
            <person name="Errington J."/>
            <person name="Fabret C."/>
            <person name="Ferrari E."/>
            <person name="Foulger D."/>
            <person name="Fritz C."/>
            <person name="Fujita M."/>
            <person name="Fujita Y."/>
            <person name="Fuma S."/>
            <person name="Galizzi A."/>
            <person name="Galleron N."/>
            <person name="Ghim S.-Y."/>
            <person name="Glaser P."/>
            <person name="Goffeau A."/>
            <person name="Golightly E.J."/>
            <person name="Grandi G."/>
            <person name="Guiseppi G."/>
            <person name="Guy B.J."/>
            <person name="Haga K."/>
            <person name="Haiech J."/>
            <person name="Harwood C.R."/>
            <person name="Henaut A."/>
            <person name="Hilbert H."/>
            <person name="Holsappel S."/>
            <person name="Hosono S."/>
            <person name="Hullo M.-F."/>
            <person name="Itaya M."/>
            <person name="Jones L.-M."/>
            <person name="Joris B."/>
            <person name="Karamata D."/>
            <person name="Kasahara Y."/>
            <person name="Klaerr-Blanchard M."/>
            <person name="Klein C."/>
            <person name="Kobayashi Y."/>
            <person name="Koetter P."/>
            <person name="Koningstein G."/>
            <person name="Krogh S."/>
            <person name="Kumano M."/>
            <person name="Kurita K."/>
            <person name="Lapidus A."/>
            <person name="Lardinois S."/>
            <person name="Lauber J."/>
            <person name="Lazarevic V."/>
            <person name="Lee S.-M."/>
            <person name="Levine A."/>
            <person name="Liu H."/>
            <person name="Masuda S."/>
            <person name="Mauel C."/>
            <person name="Medigue C."/>
            <person name="Medina N."/>
            <person name="Mellado R.P."/>
            <person name="Mizuno M."/>
            <person name="Moestl D."/>
            <person name="Nakai S."/>
            <person name="Noback M."/>
            <person name="Noone D."/>
            <person name="O'Reilly M."/>
            <person name="Ogawa K."/>
            <person name="Ogiwara A."/>
            <person name="Oudega B."/>
            <person name="Park S.-H."/>
            <person name="Parro V."/>
            <person name="Pohl T.M."/>
            <person name="Portetelle D."/>
            <person name="Porwollik S."/>
            <person name="Prescott A.M."/>
            <person name="Presecan E."/>
            <person name="Pujic P."/>
            <person name="Purnelle B."/>
            <person name="Rapoport G."/>
            <person name="Rey M."/>
            <person name="Reynolds S."/>
            <person name="Rieger M."/>
            <person name="Rivolta C."/>
            <person name="Rocha E."/>
            <person name="Roche B."/>
            <person name="Rose M."/>
            <person name="Sadaie Y."/>
            <person name="Sato T."/>
            <person name="Scanlan E."/>
            <person name="Schleich S."/>
            <person name="Schroeter R."/>
            <person name="Scoffone F."/>
            <person name="Sekiguchi J."/>
            <person name="Sekowska A."/>
            <person name="Seror S.J."/>
            <person name="Serror P."/>
            <person name="Shin B.-S."/>
            <person name="Soldo B."/>
            <person name="Sorokin A."/>
            <person name="Tacconi E."/>
            <person name="Takagi T."/>
            <person name="Takahashi H."/>
            <person name="Takemaru K."/>
            <person name="Takeuchi M."/>
            <person name="Tamakoshi A."/>
            <person name="Tanaka T."/>
            <person name="Terpstra P."/>
            <person name="Tognoni A."/>
            <person name="Tosato V."/>
            <person name="Uchiyama S."/>
            <person name="Vandenbol M."/>
            <person name="Vannier F."/>
            <person name="Vassarotti A."/>
            <person name="Viari A."/>
            <person name="Wambutt R."/>
            <person name="Wedler E."/>
            <person name="Wedler H."/>
            <person name="Weitzenegger T."/>
            <person name="Winters P."/>
            <person name="Wipat A."/>
            <person name="Yamamoto H."/>
            <person name="Yamane K."/>
            <person name="Yasumoto K."/>
            <person name="Yata K."/>
            <person name="Yoshida K."/>
            <person name="Yoshikawa H.-F."/>
            <person name="Zumstein E."/>
            <person name="Yoshikawa H."/>
            <person name="Danchin A."/>
        </authorList>
    </citation>
    <scope>NUCLEOTIDE SEQUENCE [LARGE SCALE GENOMIC DNA]</scope>
    <source>
        <strain>168</strain>
    </source>
</reference>
<reference key="3">
    <citation type="journal article" date="2000" name="J. Biol. Chem.">
        <title>Two glyceraldehyde-3-phosphate dehydrogenases with opposite physiological roles in a nonphotosynthetic bacterium.</title>
        <authorList>
            <person name="Fillinger S."/>
            <person name="Boschi-Muller S."/>
            <person name="Azza S."/>
            <person name="Dervyn E."/>
            <person name="Branlant G."/>
            <person name="Aymerich S."/>
        </authorList>
    </citation>
    <scope>FUNCTION</scope>
    <scope>CATALYTIC ACTIVITY</scope>
    <scope>BIOPHYSICOCHEMICAL PROPERTIES</scope>
    <scope>DISRUPTION PHENOTYPE</scope>
    <scope>PATHWAY</scope>
</reference>
<reference key="4">
    <citation type="journal article" date="2021" name="Redox Biol.">
        <title>The Bacillus subtilis monothiol bacilliredoxin BrxC (YtxJ) and the Bdr (YpdA) disulfide reductase reduce S-bacillithiolated proteins.</title>
        <authorList>
            <person name="Gaballa A."/>
            <person name="Su T.T."/>
            <person name="Helmann J.D."/>
        </authorList>
    </citation>
    <scope>INTERACTION WITH BRXC</scope>
    <scope>PTM</scope>
    <scope>IDENTIFICATION BY MASS SPECTROMETRY</scope>
    <source>
        <strain evidence="6">168 / CU1065</strain>
    </source>
</reference>
<comment type="function">
    <text evidence="3">Involved in the gluconeogenesis. Catalyzes the oxidative phosphorylation of glyceraldehyde 3-phosphate (G3P) to 1,3-bisphosphoglycerate (BPG) using the cofactor NADP. The first reaction step involves the formation of a hemiacetal intermediate between G3P and a cysteine residue, and this hemiacetal intermediate is then oxidized to a thioester, with concomitant reduction of NADP to NADPH. The reduced NADPH is then exchanged with the second NADP, and the thioester is attacked by a nucleophilic inorganic phosphate to produce BPG.</text>
</comment>
<comment type="catalytic activity">
    <reaction evidence="3">
        <text>D-glyceraldehyde 3-phosphate + phosphate + NADP(+) = (2R)-3-phospho-glyceroyl phosphate + NADPH + H(+)</text>
        <dbReference type="Rhea" id="RHEA:10296"/>
        <dbReference type="ChEBI" id="CHEBI:15378"/>
        <dbReference type="ChEBI" id="CHEBI:43474"/>
        <dbReference type="ChEBI" id="CHEBI:57604"/>
        <dbReference type="ChEBI" id="CHEBI:57783"/>
        <dbReference type="ChEBI" id="CHEBI:58349"/>
        <dbReference type="ChEBI" id="CHEBI:59776"/>
        <dbReference type="EC" id="1.2.1.59"/>
    </reaction>
</comment>
<comment type="catalytic activity">
    <reaction evidence="3">
        <text>D-glyceraldehyde 3-phosphate + phosphate + NAD(+) = (2R)-3-phospho-glyceroyl phosphate + NADH + H(+)</text>
        <dbReference type="Rhea" id="RHEA:10300"/>
        <dbReference type="ChEBI" id="CHEBI:15378"/>
        <dbReference type="ChEBI" id="CHEBI:43474"/>
        <dbReference type="ChEBI" id="CHEBI:57540"/>
        <dbReference type="ChEBI" id="CHEBI:57604"/>
        <dbReference type="ChEBI" id="CHEBI:57945"/>
        <dbReference type="ChEBI" id="CHEBI:59776"/>
        <dbReference type="EC" id="1.2.1.59"/>
    </reaction>
</comment>
<comment type="biophysicochemical properties">
    <kinetics>
        <KM evidence="3">0.86 mM for NADP (at pH 9.2 and 25 degrees Celsius)</KM>
        <KM evidence="3">5.7 mM for NAD (at pH 9.2 and 25 degrees Celsius)</KM>
        <text evidence="3">kcat is 1 sec(-1) for dehydrogenase activity with NAD (at pH 9.2 and 25 degrees Celsius). kcat is 8 sec(-1) for dehydrogenase activity with NADP (at pH 9.2 and 25 degrees Celsius).</text>
    </kinetics>
</comment>
<comment type="pathway">
    <text evidence="3">Carbohydrate biosynthesis; gluconeogenesis.</text>
</comment>
<comment type="subunit">
    <text evidence="1 4">Homotetramer (By similarity). Interacts with BrxC (PubMed:33722570).</text>
</comment>
<comment type="subcellular location">
    <subcellularLocation>
        <location evidence="7">Cytoplasm</location>
    </subcellularLocation>
</comment>
<comment type="PTM">
    <text evidence="8">In response to oxidative stress, the active site Cys likely reacts with bacillithiol (BSH) to form mixed disulfides to protect the Cys residue against overoxidation. S-bacillithiolation presumably leads to loss of catalytic activity. Debacillithiolation by monothiol bacilliredoxin BrxC restores the activity.</text>
</comment>
<comment type="disruption phenotype">
    <text evidence="3">Cells lacking this gene are unable to grow in medium containing asparagine as a sole carbon source but presents the same growth rate as the wild-type in glucose-containing medium.</text>
</comment>
<comment type="similarity">
    <text evidence="7">Belongs to the glyceraldehyde-3-phosphate dehydrogenase family.</text>
</comment>
<evidence type="ECO:0000250" key="1">
    <source>
        <dbReference type="UniProtKB" id="P00362"/>
    </source>
</evidence>
<evidence type="ECO:0000250" key="2">
    <source>
        <dbReference type="UniProtKB" id="Q6GIL8"/>
    </source>
</evidence>
<evidence type="ECO:0000269" key="3">
    <source>
    </source>
</evidence>
<evidence type="ECO:0000269" key="4">
    <source>
    </source>
</evidence>
<evidence type="ECO:0000303" key="5">
    <source>
    </source>
</evidence>
<evidence type="ECO:0000303" key="6">
    <source>
    </source>
</evidence>
<evidence type="ECO:0000305" key="7"/>
<evidence type="ECO:0000305" key="8">
    <source>
    </source>
</evidence>
<accession>O34425</accession>
<organism>
    <name type="scientific">Bacillus subtilis (strain 168)</name>
    <dbReference type="NCBI Taxonomy" id="224308"/>
    <lineage>
        <taxon>Bacteria</taxon>
        <taxon>Bacillati</taxon>
        <taxon>Bacillota</taxon>
        <taxon>Bacilli</taxon>
        <taxon>Bacillales</taxon>
        <taxon>Bacillaceae</taxon>
        <taxon>Bacillus</taxon>
    </lineage>
</organism>
<protein>
    <recommendedName>
        <fullName evidence="5">Glyceraldehyde-3-phosphate dehydrogenase 2</fullName>
        <shortName evidence="5">GAPDH</shortName>
        <ecNumber evidence="3">1.2.1.59</ecNumber>
    </recommendedName>
    <alternativeName>
        <fullName evidence="5">NAD(P)-dependent glyceraldehyde-3-phosphate dehydrogenase</fullName>
    </alternativeName>
</protein>
<gene>
    <name evidence="5" type="primary">gapB</name>
    <name type="ordered locus">BSU29020</name>
</gene>
<feature type="chain" id="PRO_0000145635" description="Glyceraldehyde-3-phosphate dehydrogenase 2">
    <location>
        <begin position="1"/>
        <end position="340"/>
    </location>
</feature>
<feature type="active site" description="Nucleophile" evidence="1">
    <location>
        <position position="152"/>
    </location>
</feature>
<feature type="binding site" evidence="1">
    <location>
        <begin position="12"/>
        <end position="13"/>
    </location>
    <ligand>
        <name>NADP(+)</name>
        <dbReference type="ChEBI" id="CHEBI:58349"/>
    </ligand>
</feature>
<feature type="binding site" evidence="1">
    <location>
        <position position="78"/>
    </location>
    <ligand>
        <name>NADP(+)</name>
        <dbReference type="ChEBI" id="CHEBI:58349"/>
    </ligand>
</feature>
<feature type="binding site" evidence="1">
    <location>
        <position position="120"/>
    </location>
    <ligand>
        <name>NADP(+)</name>
        <dbReference type="ChEBI" id="CHEBI:58349"/>
    </ligand>
</feature>
<feature type="binding site" evidence="1">
    <location>
        <begin position="151"/>
        <end position="153"/>
    </location>
    <ligand>
        <name>D-glyceraldehyde 3-phosphate</name>
        <dbReference type="ChEBI" id="CHEBI:59776"/>
    </ligand>
</feature>
<feature type="binding site" evidence="1">
    <location>
        <position position="182"/>
    </location>
    <ligand>
        <name>D-glyceraldehyde 3-phosphate</name>
        <dbReference type="ChEBI" id="CHEBI:59776"/>
    </ligand>
</feature>
<feature type="binding site" evidence="1">
    <location>
        <position position="183"/>
    </location>
    <ligand>
        <name>NADP(+)</name>
        <dbReference type="ChEBI" id="CHEBI:58349"/>
    </ligand>
</feature>
<feature type="binding site" evidence="1">
    <location>
        <position position="197"/>
    </location>
    <ligand>
        <name>D-glyceraldehyde 3-phosphate</name>
        <dbReference type="ChEBI" id="CHEBI:59776"/>
    </ligand>
</feature>
<feature type="binding site" evidence="1">
    <location>
        <begin position="210"/>
        <end position="211"/>
    </location>
    <ligand>
        <name>D-glyceraldehyde 3-phosphate</name>
        <dbReference type="ChEBI" id="CHEBI:59776"/>
    </ligand>
</feature>
<feature type="binding site" evidence="1">
    <location>
        <position position="233"/>
    </location>
    <ligand>
        <name>D-glyceraldehyde 3-phosphate</name>
        <dbReference type="ChEBI" id="CHEBI:59776"/>
    </ligand>
</feature>
<feature type="binding site" evidence="1">
    <location>
        <position position="315"/>
    </location>
    <ligand>
        <name>NADP(+)</name>
        <dbReference type="ChEBI" id="CHEBI:58349"/>
    </ligand>
</feature>
<feature type="site" description="Activates thiol group during catalysis" evidence="2">
    <location>
        <position position="179"/>
    </location>
</feature>
<keyword id="KW-0002">3D-structure</keyword>
<keyword id="KW-0963">Cytoplasm</keyword>
<keyword id="KW-0312">Gluconeogenesis</keyword>
<keyword id="KW-0520">NAD</keyword>
<keyword id="KW-0521">NADP</keyword>
<keyword id="KW-0547">Nucleotide-binding</keyword>
<keyword id="KW-0560">Oxidoreductase</keyword>
<keyword id="KW-1185">Reference proteome</keyword>
<sequence length="340" mass="37476">MKVKVAINGFGRIGRMVFRKAMLDDQIQVVAINASYSAETLAHLIKYDTIHGRYDKEVVAGEDSLIVNGKKVLLLNSRDPKQLPWREYDIDIVVEATGKFNAKDKAMGHIEAGAKKVILTAPGKNEDVTIVMGVNEDQFDAERHVIISNASCTTNCLAPVVKVLDEEFGIESGLMTTVHAYTNDQKNIDNPHKDLRRARACGESIIPTTTGAAKALSLVLPHLKGKLHGLALRVPVPNVSLVDLVVDLKTDVTAEEVNEAFKRAAKTSMYGVLDYSDEPLVSTDYNTNPHSAVIDGLTTMVMEDRKVKVLAWYDNEWGYSCRVVDLIRHVAARMKHPSAV</sequence>
<proteinExistence type="evidence at protein level"/>
<name>G3P2_BACSU</name>
<dbReference type="EC" id="1.2.1.59" evidence="3"/>
<dbReference type="EMBL" id="AF008220">
    <property type="protein sequence ID" value="AAC00355.1"/>
    <property type="molecule type" value="Genomic_DNA"/>
</dbReference>
<dbReference type="EMBL" id="AL009126">
    <property type="protein sequence ID" value="CAB14862.1"/>
    <property type="molecule type" value="Genomic_DNA"/>
</dbReference>
<dbReference type="PIR" id="G69628">
    <property type="entry name" value="G69628"/>
</dbReference>
<dbReference type="RefSeq" id="NP_390780.1">
    <property type="nucleotide sequence ID" value="NC_000964.3"/>
</dbReference>
<dbReference type="RefSeq" id="WP_003229459.1">
    <property type="nucleotide sequence ID" value="NZ_OZ025638.1"/>
</dbReference>
<dbReference type="PDB" id="8WWZ">
    <property type="method" value="X-ray"/>
    <property type="resolution" value="2.30 A"/>
    <property type="chains" value="A=1-340"/>
</dbReference>
<dbReference type="PDBsum" id="8WWZ"/>
<dbReference type="SMR" id="O34425"/>
<dbReference type="FunCoup" id="O34425">
    <property type="interactions" value="646"/>
</dbReference>
<dbReference type="STRING" id="224308.BSU29020"/>
<dbReference type="jPOST" id="O34425"/>
<dbReference type="PaxDb" id="224308-BSU29020"/>
<dbReference type="EnsemblBacteria" id="CAB14862">
    <property type="protein sequence ID" value="CAB14862"/>
    <property type="gene ID" value="BSU_29020"/>
</dbReference>
<dbReference type="GeneID" id="937393"/>
<dbReference type="KEGG" id="bsu:BSU29020"/>
<dbReference type="PATRIC" id="fig|224308.179.peg.3151"/>
<dbReference type="eggNOG" id="COG0057">
    <property type="taxonomic scope" value="Bacteria"/>
</dbReference>
<dbReference type="InParanoid" id="O34425"/>
<dbReference type="OrthoDB" id="9803304at2"/>
<dbReference type="PhylomeDB" id="O34425"/>
<dbReference type="BioCyc" id="BSUB:BSU29020-MONOMER"/>
<dbReference type="BRENDA" id="1.2.1.13">
    <property type="organism ID" value="658"/>
</dbReference>
<dbReference type="BRENDA" id="1.2.1.59">
    <property type="organism ID" value="658"/>
</dbReference>
<dbReference type="SABIO-RK" id="O34425"/>
<dbReference type="UniPathway" id="UPA00138"/>
<dbReference type="Proteomes" id="UP000001570">
    <property type="component" value="Chromosome"/>
</dbReference>
<dbReference type="GO" id="GO:0005737">
    <property type="term" value="C:cytoplasm"/>
    <property type="evidence" value="ECO:0007669"/>
    <property type="project" value="UniProtKB-SubCell"/>
</dbReference>
<dbReference type="GO" id="GO:0004365">
    <property type="term" value="F:glyceraldehyde-3-phosphate dehydrogenase (NAD+) (phosphorylating) activity"/>
    <property type="evidence" value="ECO:0000250"/>
    <property type="project" value="UniProtKB"/>
</dbReference>
<dbReference type="GO" id="GO:0047100">
    <property type="term" value="F:glyceraldehyde-3-phosphate dehydrogenase (NADP+) (phosphorylating) activity"/>
    <property type="evidence" value="ECO:0007669"/>
    <property type="project" value="RHEA"/>
</dbReference>
<dbReference type="GO" id="GO:0043891">
    <property type="term" value="F:glyceraldehyde-3-phosphate dehydrogenase [NAD(P)+] (phosphorylating) activity"/>
    <property type="evidence" value="ECO:0000314"/>
    <property type="project" value="UniProtKB"/>
</dbReference>
<dbReference type="GO" id="GO:0051287">
    <property type="term" value="F:NAD binding"/>
    <property type="evidence" value="ECO:0000250"/>
    <property type="project" value="UniProtKB"/>
</dbReference>
<dbReference type="GO" id="GO:0050661">
    <property type="term" value="F:NADP binding"/>
    <property type="evidence" value="ECO:0000314"/>
    <property type="project" value="UniProtKB"/>
</dbReference>
<dbReference type="GO" id="GO:0006094">
    <property type="term" value="P:gluconeogenesis"/>
    <property type="evidence" value="ECO:0000315"/>
    <property type="project" value="UniProtKB"/>
</dbReference>
<dbReference type="GO" id="GO:0006006">
    <property type="term" value="P:glucose metabolic process"/>
    <property type="evidence" value="ECO:0000318"/>
    <property type="project" value="GO_Central"/>
</dbReference>
<dbReference type="CDD" id="cd18126">
    <property type="entry name" value="GAPDH_I_C"/>
    <property type="match status" value="1"/>
</dbReference>
<dbReference type="CDD" id="cd05214">
    <property type="entry name" value="GAPDH_I_N"/>
    <property type="match status" value="1"/>
</dbReference>
<dbReference type="FunFam" id="3.30.360.10:FF:000002">
    <property type="entry name" value="Glyceraldehyde-3-phosphate dehydrogenase"/>
    <property type="match status" value="1"/>
</dbReference>
<dbReference type="FunFam" id="3.40.50.720:FF:000001">
    <property type="entry name" value="Glyceraldehyde-3-phosphate dehydrogenase"/>
    <property type="match status" value="1"/>
</dbReference>
<dbReference type="Gene3D" id="3.30.360.10">
    <property type="entry name" value="Dihydrodipicolinate Reductase, domain 2"/>
    <property type="match status" value="1"/>
</dbReference>
<dbReference type="Gene3D" id="3.40.50.720">
    <property type="entry name" value="NAD(P)-binding Rossmann-like Domain"/>
    <property type="match status" value="1"/>
</dbReference>
<dbReference type="InterPro" id="IPR020831">
    <property type="entry name" value="GlycerAld/Erythrose_P_DH"/>
</dbReference>
<dbReference type="InterPro" id="IPR020830">
    <property type="entry name" value="GlycerAld_3-P_DH_AS"/>
</dbReference>
<dbReference type="InterPro" id="IPR020829">
    <property type="entry name" value="GlycerAld_3-P_DH_cat"/>
</dbReference>
<dbReference type="InterPro" id="IPR020828">
    <property type="entry name" value="GlycerAld_3-P_DH_NAD(P)-bd"/>
</dbReference>
<dbReference type="InterPro" id="IPR006424">
    <property type="entry name" value="Glyceraldehyde-3-P_DH_1"/>
</dbReference>
<dbReference type="InterPro" id="IPR036291">
    <property type="entry name" value="NAD(P)-bd_dom_sf"/>
</dbReference>
<dbReference type="NCBIfam" id="TIGR01534">
    <property type="entry name" value="GAPDH-I"/>
    <property type="match status" value="1"/>
</dbReference>
<dbReference type="NCBIfam" id="NF005830">
    <property type="entry name" value="PRK07729.1"/>
    <property type="match status" value="1"/>
</dbReference>
<dbReference type="PANTHER" id="PTHR43148">
    <property type="entry name" value="GLYCERALDEHYDE-3-PHOSPHATE DEHYDROGENASE 2"/>
    <property type="match status" value="1"/>
</dbReference>
<dbReference type="Pfam" id="PF02800">
    <property type="entry name" value="Gp_dh_C"/>
    <property type="match status" value="1"/>
</dbReference>
<dbReference type="Pfam" id="PF00044">
    <property type="entry name" value="Gp_dh_N"/>
    <property type="match status" value="1"/>
</dbReference>
<dbReference type="PIRSF" id="PIRSF000149">
    <property type="entry name" value="GAP_DH"/>
    <property type="match status" value="1"/>
</dbReference>
<dbReference type="PRINTS" id="PR00078">
    <property type="entry name" value="G3PDHDRGNASE"/>
</dbReference>
<dbReference type="SMART" id="SM00846">
    <property type="entry name" value="Gp_dh_N"/>
    <property type="match status" value="1"/>
</dbReference>
<dbReference type="SUPFAM" id="SSF55347">
    <property type="entry name" value="Glyceraldehyde-3-phosphate dehydrogenase-like, C-terminal domain"/>
    <property type="match status" value="1"/>
</dbReference>
<dbReference type="SUPFAM" id="SSF51735">
    <property type="entry name" value="NAD(P)-binding Rossmann-fold domains"/>
    <property type="match status" value="1"/>
</dbReference>
<dbReference type="PROSITE" id="PS00071">
    <property type="entry name" value="GAPDH"/>
    <property type="match status" value="1"/>
</dbReference>